<name>NUSB_NOVAD</name>
<feature type="chain" id="PRO_0000265555" description="Transcription antitermination protein NusB">
    <location>
        <begin position="1"/>
        <end position="148"/>
    </location>
</feature>
<dbReference type="EMBL" id="CP000248">
    <property type="protein sequence ID" value="ABD27356.1"/>
    <property type="molecule type" value="Genomic_DNA"/>
</dbReference>
<dbReference type="RefSeq" id="WP_011446560.1">
    <property type="nucleotide sequence ID" value="NC_007794.1"/>
</dbReference>
<dbReference type="SMR" id="Q2G467"/>
<dbReference type="STRING" id="279238.Saro_2921"/>
<dbReference type="KEGG" id="nar:Saro_2921"/>
<dbReference type="eggNOG" id="COG0781">
    <property type="taxonomic scope" value="Bacteria"/>
</dbReference>
<dbReference type="HOGENOM" id="CLU_087843_4_0_5"/>
<dbReference type="Proteomes" id="UP000009134">
    <property type="component" value="Chromosome"/>
</dbReference>
<dbReference type="GO" id="GO:0005829">
    <property type="term" value="C:cytosol"/>
    <property type="evidence" value="ECO:0007669"/>
    <property type="project" value="TreeGrafter"/>
</dbReference>
<dbReference type="GO" id="GO:0003723">
    <property type="term" value="F:RNA binding"/>
    <property type="evidence" value="ECO:0007669"/>
    <property type="project" value="UniProtKB-UniRule"/>
</dbReference>
<dbReference type="GO" id="GO:0006353">
    <property type="term" value="P:DNA-templated transcription termination"/>
    <property type="evidence" value="ECO:0007669"/>
    <property type="project" value="UniProtKB-UniRule"/>
</dbReference>
<dbReference type="GO" id="GO:0031564">
    <property type="term" value="P:transcription antitermination"/>
    <property type="evidence" value="ECO:0007669"/>
    <property type="project" value="UniProtKB-KW"/>
</dbReference>
<dbReference type="Gene3D" id="1.10.940.10">
    <property type="entry name" value="NusB-like"/>
    <property type="match status" value="1"/>
</dbReference>
<dbReference type="HAMAP" id="MF_00073">
    <property type="entry name" value="NusB"/>
    <property type="match status" value="1"/>
</dbReference>
<dbReference type="InterPro" id="IPR035926">
    <property type="entry name" value="NusB-like_sf"/>
</dbReference>
<dbReference type="InterPro" id="IPR011605">
    <property type="entry name" value="NusB_fam"/>
</dbReference>
<dbReference type="InterPro" id="IPR006027">
    <property type="entry name" value="NusB_RsmB_TIM44"/>
</dbReference>
<dbReference type="NCBIfam" id="TIGR01951">
    <property type="entry name" value="nusB"/>
    <property type="match status" value="1"/>
</dbReference>
<dbReference type="PANTHER" id="PTHR11078:SF3">
    <property type="entry name" value="ANTITERMINATION NUSB DOMAIN-CONTAINING PROTEIN"/>
    <property type="match status" value="1"/>
</dbReference>
<dbReference type="PANTHER" id="PTHR11078">
    <property type="entry name" value="N UTILIZATION SUBSTANCE PROTEIN B-RELATED"/>
    <property type="match status" value="1"/>
</dbReference>
<dbReference type="Pfam" id="PF01029">
    <property type="entry name" value="NusB"/>
    <property type="match status" value="1"/>
</dbReference>
<dbReference type="SUPFAM" id="SSF48013">
    <property type="entry name" value="NusB-like"/>
    <property type="match status" value="1"/>
</dbReference>
<comment type="function">
    <text evidence="1">Involved in transcription antitermination. Required for transcription of ribosomal RNA (rRNA) genes. Binds specifically to the boxA antiterminator sequence of the ribosomal RNA (rrn) operons.</text>
</comment>
<comment type="similarity">
    <text evidence="1">Belongs to the NusB family.</text>
</comment>
<reference key="1">
    <citation type="submission" date="2006-01" db="EMBL/GenBank/DDBJ databases">
        <title>Complete sequence of Novosphingobium aromaticivorans DSM 12444.</title>
        <authorList>
            <consortium name="US DOE Joint Genome Institute"/>
            <person name="Copeland A."/>
            <person name="Lucas S."/>
            <person name="Lapidus A."/>
            <person name="Barry K."/>
            <person name="Detter J.C."/>
            <person name="Glavina T."/>
            <person name="Hammon N."/>
            <person name="Israni S."/>
            <person name="Pitluck S."/>
            <person name="Chain P."/>
            <person name="Malfatti S."/>
            <person name="Shin M."/>
            <person name="Vergez L."/>
            <person name="Schmutz J."/>
            <person name="Larimer F."/>
            <person name="Land M."/>
            <person name="Kyrpides N."/>
            <person name="Ivanova N."/>
            <person name="Fredrickson J."/>
            <person name="Balkwill D."/>
            <person name="Romine M.F."/>
            <person name="Richardson P."/>
        </authorList>
    </citation>
    <scope>NUCLEOTIDE SEQUENCE [LARGE SCALE GENOMIC DNA]</scope>
    <source>
        <strain>ATCC 700278 / DSM 12444 / CCUG 56034 / CIP 105152 / NBRC 16084 / F199</strain>
    </source>
</reference>
<gene>
    <name evidence="1" type="primary">nusB</name>
    <name type="ordered locus">Saro_2921</name>
</gene>
<keyword id="KW-1185">Reference proteome</keyword>
<keyword id="KW-0694">RNA-binding</keyword>
<keyword id="KW-0804">Transcription</keyword>
<keyword id="KW-0889">Transcription antitermination</keyword>
<keyword id="KW-0805">Transcription regulation</keyword>
<accession>Q2G467</accession>
<sequence>MTQISGKARAAARLAAVQALYQADMEQTPLHLLLDEFHQHRLGAEIEDVEYAKADVAFFDDVVKGVDARRDEIDGLLSARLAKGWALPRLDRTMLQILRAGAYELMARRDVNVGTVITEYVDVAHAFFEEREAKFVNGLLDAVAKDVR</sequence>
<protein>
    <recommendedName>
        <fullName evidence="1">Transcription antitermination protein NusB</fullName>
    </recommendedName>
    <alternativeName>
        <fullName evidence="1">Antitermination factor NusB</fullName>
    </alternativeName>
</protein>
<proteinExistence type="inferred from homology"/>
<evidence type="ECO:0000255" key="1">
    <source>
        <dbReference type="HAMAP-Rule" id="MF_00073"/>
    </source>
</evidence>
<organism>
    <name type="scientific">Novosphingobium aromaticivorans (strain ATCC 700278 / DSM 12444 / CCUG 56034 / CIP 105152 / NBRC 16084 / F199)</name>
    <dbReference type="NCBI Taxonomy" id="279238"/>
    <lineage>
        <taxon>Bacteria</taxon>
        <taxon>Pseudomonadati</taxon>
        <taxon>Pseudomonadota</taxon>
        <taxon>Alphaproteobacteria</taxon>
        <taxon>Sphingomonadales</taxon>
        <taxon>Sphingomonadaceae</taxon>
        <taxon>Novosphingobium</taxon>
    </lineage>
</organism>